<keyword id="KW-0249">Electron transport</keyword>
<keyword id="KW-0275">Fatty acid biosynthesis</keyword>
<keyword id="KW-0276">Fatty acid metabolism</keyword>
<keyword id="KW-0349">Heme</keyword>
<keyword id="KW-0408">Iron</keyword>
<keyword id="KW-0444">Lipid biosynthesis</keyword>
<keyword id="KW-0443">Lipid metabolism</keyword>
<keyword id="KW-0472">Membrane</keyword>
<keyword id="KW-0479">Metal-binding</keyword>
<keyword id="KW-0560">Oxidoreductase</keyword>
<keyword id="KW-0812">Transmembrane</keyword>
<keyword id="KW-1133">Transmembrane helix</keyword>
<keyword id="KW-0813">Transport</keyword>
<gene>
    <name evidence="5" type="primary">Plesd1</name>
    <name evidence="8" type="synonym">des1</name>
</gene>
<reference key="1">
    <citation type="journal article" date="2003" name="FEBS Lett.">
        <title>Identification of a very long chain polyunsaturated fatty acid Delta4-desaturase from the microalga Pavlova lutheri.</title>
        <authorList>
            <person name="Tonon T."/>
            <person name="Harvey D."/>
            <person name="Larson T.R."/>
            <person name="Graham I.A."/>
        </authorList>
    </citation>
    <scope>NUCLEOTIDE SEQUENCE [MRNA]</scope>
    <scope>FUNCTION</scope>
    <scope>CATALYTIC ACTIVITY</scope>
    <source>
        <strain>CCAP 931/1</strain>
    </source>
</reference>
<feature type="chain" id="PRO_0000434756" description="Acyl-lipid (7-3)-desaturase">
    <location>
        <begin position="1"/>
        <end position="445"/>
    </location>
</feature>
<feature type="transmembrane region" description="Helical" evidence="2">
    <location>
        <begin position="126"/>
        <end position="146"/>
    </location>
</feature>
<feature type="transmembrane region" description="Helical" evidence="2">
    <location>
        <begin position="148"/>
        <end position="168"/>
    </location>
</feature>
<feature type="transmembrane region" description="Helical" evidence="2">
    <location>
        <begin position="247"/>
        <end position="267"/>
    </location>
</feature>
<feature type="transmembrane region" description="Helical" evidence="2">
    <location>
        <begin position="283"/>
        <end position="303"/>
    </location>
</feature>
<feature type="transmembrane region" description="Helical" evidence="2">
    <location>
        <begin position="312"/>
        <end position="332"/>
    </location>
</feature>
<feature type="domain" description="Cytochrome b5 heme-binding" evidence="3">
    <location>
        <begin position="11"/>
        <end position="91"/>
    </location>
</feature>
<feature type="short sequence motif" description="Histidine box-1" evidence="6">
    <location>
        <begin position="170"/>
        <end position="174"/>
    </location>
</feature>
<feature type="short sequence motif" description="Histidine box-2" evidence="6">
    <location>
        <begin position="205"/>
        <end position="210"/>
    </location>
</feature>
<feature type="short sequence motif" description="Histidine box-3" evidence="6">
    <location>
        <begin position="380"/>
        <end position="384"/>
    </location>
</feature>
<feature type="binding site" description="axial binding residue" evidence="3">
    <location>
        <position position="50"/>
    </location>
    <ligand>
        <name>heme</name>
        <dbReference type="ChEBI" id="CHEBI:30413"/>
    </ligand>
    <ligandPart>
        <name>Fe</name>
        <dbReference type="ChEBI" id="CHEBI:18248"/>
    </ligandPart>
</feature>
<feature type="binding site" description="axial binding residue" evidence="3">
    <location>
        <position position="73"/>
    </location>
    <ligand>
        <name>heme</name>
        <dbReference type="ChEBI" id="CHEBI:30413"/>
    </ligand>
    <ligandPart>
        <name>Fe</name>
        <dbReference type="ChEBI" id="CHEBI:18248"/>
    </ligandPart>
</feature>
<evidence type="ECO:0000250" key="1">
    <source>
        <dbReference type="UniProtKB" id="O00767"/>
    </source>
</evidence>
<evidence type="ECO:0000255" key="2"/>
<evidence type="ECO:0000255" key="3">
    <source>
        <dbReference type="PROSITE-ProRule" id="PRU00279"/>
    </source>
</evidence>
<evidence type="ECO:0000269" key="4">
    <source>
    </source>
</evidence>
<evidence type="ECO:0000303" key="5">
    <source>
    </source>
</evidence>
<evidence type="ECO:0000305" key="6"/>
<evidence type="ECO:0000305" key="7">
    <source>
    </source>
</evidence>
<evidence type="ECO:0000312" key="8">
    <source>
        <dbReference type="EMBL" id="AAQ98793.1"/>
    </source>
</evidence>
<accession>Q6VPV2</accession>
<protein>
    <recommendedName>
        <fullName evidence="6">Acyl-lipid (7-3)-desaturase</fullName>
        <ecNumber evidence="7">1.14.19.31</ecNumber>
    </recommendedName>
    <alternativeName>
        <fullName evidence="6">Acyl-lipid 4-desaturase</fullName>
    </alternativeName>
    <alternativeName>
        <fullName evidence="5">Delta-4 fatty acid desaturase</fullName>
    </alternativeName>
</protein>
<dbReference type="EC" id="1.14.19.31" evidence="7"/>
<dbReference type="EMBL" id="AY332747">
    <property type="protein sequence ID" value="AAQ98793.1"/>
    <property type="molecule type" value="mRNA"/>
</dbReference>
<dbReference type="SMR" id="Q6VPV2"/>
<dbReference type="OMA" id="GWHHRHY"/>
<dbReference type="OrthoDB" id="260519at2759"/>
<dbReference type="BioCyc" id="MetaCyc:MONOMER-16993"/>
<dbReference type="BRENDA" id="1.14.19.31">
    <property type="organism ID" value="7928"/>
</dbReference>
<dbReference type="GO" id="GO:0016020">
    <property type="term" value="C:membrane"/>
    <property type="evidence" value="ECO:0007669"/>
    <property type="project" value="UniProtKB-SubCell"/>
</dbReference>
<dbReference type="GO" id="GO:0046872">
    <property type="term" value="F:metal ion binding"/>
    <property type="evidence" value="ECO:0007669"/>
    <property type="project" value="UniProtKB-KW"/>
</dbReference>
<dbReference type="GO" id="GO:0016717">
    <property type="term" value="F:oxidoreductase activity, acting on paired donors, with oxidation of a pair of donors resulting in the reduction of molecular oxygen to two molecules of water"/>
    <property type="evidence" value="ECO:0000314"/>
    <property type="project" value="UniProtKB"/>
</dbReference>
<dbReference type="GO" id="GO:0042759">
    <property type="term" value="P:long-chain fatty acid biosynthetic process"/>
    <property type="evidence" value="ECO:0000314"/>
    <property type="project" value="UniProtKB"/>
</dbReference>
<dbReference type="GO" id="GO:0006636">
    <property type="term" value="P:unsaturated fatty acid biosynthetic process"/>
    <property type="evidence" value="ECO:0000314"/>
    <property type="project" value="UniProtKB"/>
</dbReference>
<dbReference type="CDD" id="cd03506">
    <property type="entry name" value="Delta6-FADS-like"/>
    <property type="match status" value="1"/>
</dbReference>
<dbReference type="FunFam" id="3.10.120.10:FF:000032">
    <property type="entry name" value="Acyl-lipid (7-3)-desaturase"/>
    <property type="match status" value="1"/>
</dbReference>
<dbReference type="Gene3D" id="3.10.120.10">
    <property type="entry name" value="Cytochrome b5-like heme/steroid binding domain"/>
    <property type="match status" value="1"/>
</dbReference>
<dbReference type="InterPro" id="IPR001199">
    <property type="entry name" value="Cyt_B5-like_heme/steroid-bd"/>
</dbReference>
<dbReference type="InterPro" id="IPR036400">
    <property type="entry name" value="Cyt_B5-like_heme/steroid_sf"/>
</dbReference>
<dbReference type="InterPro" id="IPR005804">
    <property type="entry name" value="FA_desaturase_dom"/>
</dbReference>
<dbReference type="InterPro" id="IPR012171">
    <property type="entry name" value="Fatty_acid_desaturase"/>
</dbReference>
<dbReference type="PANTHER" id="PTHR19353">
    <property type="entry name" value="FATTY ACID DESATURASE 2"/>
    <property type="match status" value="1"/>
</dbReference>
<dbReference type="PANTHER" id="PTHR19353:SF75">
    <property type="entry name" value="FATTY ACID DESATURASE, PUTATIVE-RELATED"/>
    <property type="match status" value="1"/>
</dbReference>
<dbReference type="Pfam" id="PF00173">
    <property type="entry name" value="Cyt-b5"/>
    <property type="match status" value="1"/>
</dbReference>
<dbReference type="Pfam" id="PF00487">
    <property type="entry name" value="FA_desaturase"/>
    <property type="match status" value="1"/>
</dbReference>
<dbReference type="PIRSF" id="PIRSF015921">
    <property type="entry name" value="FA_sphinglp_des"/>
    <property type="match status" value="1"/>
</dbReference>
<dbReference type="SMART" id="SM01117">
    <property type="entry name" value="Cyt-b5"/>
    <property type="match status" value="1"/>
</dbReference>
<dbReference type="SUPFAM" id="SSF55856">
    <property type="entry name" value="Cytochrome b5-like heme/steroid binding domain"/>
    <property type="match status" value="1"/>
</dbReference>
<dbReference type="PROSITE" id="PS50255">
    <property type="entry name" value="CYTOCHROME_B5_2"/>
    <property type="match status" value="1"/>
</dbReference>
<comment type="function">
    <text evidence="4">Fatty acid desaturase that introduces a cis double bond at the 4-position in 22-carbon polyunsaturated fatty acids that contain a Delta(7) double bond, resulting in the production of delta-4 desaturated fatty acid docosahexanoic acid (DHA). Mediates desaturation of 22:5n-3 and 22:4n-6 into 22:6n-3 and 22:5n-6 respectively.</text>
</comment>
<comment type="catalytic activity">
    <reaction evidence="7">
        <text>a (7Z,10Z,13Z,16Z,19Z)-docosapentaenoyl-containing glycerolipid + 2 Fe(II)-[cytochrome b5] + O2 + 2 H(+) = a (4Z,7Z,10Z,13Z,16Z,19Z)-docosahexaenoyl-containing glycerolipid + 2 Fe(III)-[cytochrome b5] + 2 H2O</text>
        <dbReference type="Rhea" id="RHEA:46252"/>
        <dbReference type="Rhea" id="RHEA-COMP:10438"/>
        <dbReference type="Rhea" id="RHEA-COMP:10439"/>
        <dbReference type="ChEBI" id="CHEBI:15377"/>
        <dbReference type="ChEBI" id="CHEBI:15378"/>
        <dbReference type="ChEBI" id="CHEBI:15379"/>
        <dbReference type="ChEBI" id="CHEBI:29033"/>
        <dbReference type="ChEBI" id="CHEBI:29034"/>
        <dbReference type="ChEBI" id="CHEBI:88266"/>
        <dbReference type="ChEBI" id="CHEBI:88267"/>
        <dbReference type="EC" id="1.14.19.31"/>
    </reaction>
</comment>
<comment type="catalytic activity">
    <reaction evidence="7">
        <text>a (7Z,10Z,13Z,16Z)-docosatetraenoyl-containing glycerolipid + 2 Fe(II)-[cytochrome b5] + O2 + 2 H(+) = a (4Z,7Z,10Z,13Z,16Z)-docosapentaenoyl-containing glycerolipid + 2 Fe(III)-[cytochrome b5] + 2 H2O</text>
        <dbReference type="Rhea" id="RHEA:46256"/>
        <dbReference type="Rhea" id="RHEA-COMP:10438"/>
        <dbReference type="Rhea" id="RHEA-COMP:10439"/>
        <dbReference type="ChEBI" id="CHEBI:15377"/>
        <dbReference type="ChEBI" id="CHEBI:15378"/>
        <dbReference type="ChEBI" id="CHEBI:15379"/>
        <dbReference type="ChEBI" id="CHEBI:29033"/>
        <dbReference type="ChEBI" id="CHEBI:29034"/>
        <dbReference type="ChEBI" id="CHEBI:88264"/>
        <dbReference type="ChEBI" id="CHEBI:88265"/>
        <dbReference type="EC" id="1.14.19.31"/>
    </reaction>
</comment>
<comment type="cofactor">
    <cofactor evidence="1">
        <name>Fe(2+)</name>
        <dbReference type="ChEBI" id="CHEBI:29033"/>
    </cofactor>
</comment>
<comment type="subcellular location">
    <subcellularLocation>
        <location evidence="2">Membrane</location>
        <topology evidence="2">Multi-pass membrane protein</topology>
    </subcellularLocation>
</comment>
<comment type="domain">
    <text evidence="6">The cytochrome b5 heme-binding domain acts as the direct electron donor to the active site of the desaturase, and does not require an external cytochrome.</text>
</comment>
<comment type="similarity">
    <text evidence="6">Belongs to the fatty acid desaturase type 1 family.</text>
</comment>
<name>D4FAD_DIALT</name>
<sequence>MPPSAASEGGVAELRAAEVASYTRKAVDERPDLTIVGDAVYDAKAFRDEHPGGAHFVSLFGGRDATEAFMEYHRRAWPKARMSKFFVGSLDASEKPTQADSAYLRLCAEVNALLPKGSGGFAPPSYWLKAAALVVAAVSIEGYMLLRGKTLLLSVFLGLVFAWIGLNIQHDANHGALSRHSVINYCLGYAQDWIGGNMVLWLQEHVVMHHLHTNDVDADPDQKAHGVLRLKPTDGWMPWHALQQLYILPGEAMYAFKLLFLDALELLAWRWEGEKISPLARALFAPAVACKLGFWARFVALPLWLQPTVHTALCICATVCTGSFYLAFFFFISHNFDGVGSVGPKGSLPRSATFVQRQVETSSNVGGYWLGVLNGGLNFQIEHHLFPRLHHSYYAQIAPVVRTHIEKLGFKYRHFPTVGSNLSSMLQHMGKMGTRPGAEKGGKAE</sequence>
<organism>
    <name type="scientific">Diacronema lutheri</name>
    <name type="common">Unicellular marine alga</name>
    <name type="synonym">Monochrysis lutheri</name>
    <dbReference type="NCBI Taxonomy" id="2081491"/>
    <lineage>
        <taxon>Eukaryota</taxon>
        <taxon>Haptista</taxon>
        <taxon>Haptophyta</taxon>
        <taxon>Pavlovales</taxon>
        <taxon>Pavlovaceae</taxon>
        <taxon>Diacronema</taxon>
    </lineage>
</organism>
<proteinExistence type="evidence at protein level"/>